<reference key="1">
    <citation type="submission" date="2009-01" db="EMBL/GenBank/DDBJ databases">
        <title>Complete sequence of Geobacter sp. FRC-32.</title>
        <authorList>
            <consortium name="US DOE Joint Genome Institute"/>
            <person name="Lucas S."/>
            <person name="Copeland A."/>
            <person name="Lapidus A."/>
            <person name="Glavina del Rio T."/>
            <person name="Dalin E."/>
            <person name="Tice H."/>
            <person name="Bruce D."/>
            <person name="Goodwin L."/>
            <person name="Pitluck S."/>
            <person name="Saunders E."/>
            <person name="Brettin T."/>
            <person name="Detter J.C."/>
            <person name="Han C."/>
            <person name="Larimer F."/>
            <person name="Land M."/>
            <person name="Hauser L."/>
            <person name="Kyrpides N."/>
            <person name="Ovchinnikova G."/>
            <person name="Kostka J."/>
            <person name="Richardson P."/>
        </authorList>
    </citation>
    <scope>NUCLEOTIDE SEQUENCE [LARGE SCALE GENOMIC DNA]</scope>
    <source>
        <strain>DSM 22248 / JCM 15807 / FRC-32</strain>
    </source>
</reference>
<accession>B9LZ85</accession>
<name>ATPG_GEODF</name>
<proteinExistence type="inferred from homology"/>
<feature type="chain" id="PRO_1000148620" description="ATP synthase gamma chain">
    <location>
        <begin position="1"/>
        <end position="287"/>
    </location>
</feature>
<protein>
    <recommendedName>
        <fullName evidence="1">ATP synthase gamma chain</fullName>
    </recommendedName>
    <alternativeName>
        <fullName evidence="1">ATP synthase F1 sector gamma subunit</fullName>
    </alternativeName>
    <alternativeName>
        <fullName evidence="1">F-ATPase gamma subunit</fullName>
    </alternativeName>
</protein>
<organism>
    <name type="scientific">Geotalea daltonii (strain DSM 22248 / JCM 15807 / FRC-32)</name>
    <name type="common">Geobacter daltonii</name>
    <dbReference type="NCBI Taxonomy" id="316067"/>
    <lineage>
        <taxon>Bacteria</taxon>
        <taxon>Pseudomonadati</taxon>
        <taxon>Thermodesulfobacteriota</taxon>
        <taxon>Desulfuromonadia</taxon>
        <taxon>Geobacterales</taxon>
        <taxon>Geobacteraceae</taxon>
        <taxon>Geotalea</taxon>
    </lineage>
</organism>
<dbReference type="EMBL" id="CP001390">
    <property type="protein sequence ID" value="ACM18817.1"/>
    <property type="molecule type" value="Genomic_DNA"/>
</dbReference>
<dbReference type="RefSeq" id="WP_012645546.1">
    <property type="nucleotide sequence ID" value="NC_011979.1"/>
</dbReference>
<dbReference type="SMR" id="B9LZ85"/>
<dbReference type="STRING" id="316067.Geob_0448"/>
<dbReference type="KEGG" id="geo:Geob_0448"/>
<dbReference type="eggNOG" id="COG0224">
    <property type="taxonomic scope" value="Bacteria"/>
</dbReference>
<dbReference type="HOGENOM" id="CLU_050669_0_1_7"/>
<dbReference type="OrthoDB" id="9812769at2"/>
<dbReference type="Proteomes" id="UP000007721">
    <property type="component" value="Chromosome"/>
</dbReference>
<dbReference type="GO" id="GO:0005886">
    <property type="term" value="C:plasma membrane"/>
    <property type="evidence" value="ECO:0007669"/>
    <property type="project" value="UniProtKB-SubCell"/>
</dbReference>
<dbReference type="GO" id="GO:0045259">
    <property type="term" value="C:proton-transporting ATP synthase complex"/>
    <property type="evidence" value="ECO:0007669"/>
    <property type="project" value="UniProtKB-KW"/>
</dbReference>
<dbReference type="GO" id="GO:0005524">
    <property type="term" value="F:ATP binding"/>
    <property type="evidence" value="ECO:0007669"/>
    <property type="project" value="UniProtKB-UniRule"/>
</dbReference>
<dbReference type="GO" id="GO:0046933">
    <property type="term" value="F:proton-transporting ATP synthase activity, rotational mechanism"/>
    <property type="evidence" value="ECO:0007669"/>
    <property type="project" value="UniProtKB-UniRule"/>
</dbReference>
<dbReference type="GO" id="GO:0042777">
    <property type="term" value="P:proton motive force-driven plasma membrane ATP synthesis"/>
    <property type="evidence" value="ECO:0007669"/>
    <property type="project" value="UniProtKB-UniRule"/>
</dbReference>
<dbReference type="CDD" id="cd12151">
    <property type="entry name" value="F1-ATPase_gamma"/>
    <property type="match status" value="1"/>
</dbReference>
<dbReference type="FunFam" id="1.10.287.80:FF:000001">
    <property type="entry name" value="ATP synthase gamma chain"/>
    <property type="match status" value="1"/>
</dbReference>
<dbReference type="FunFam" id="1.10.287.80:FF:000003">
    <property type="entry name" value="ATP synthase gamma chain, chloroplastic"/>
    <property type="match status" value="1"/>
</dbReference>
<dbReference type="Gene3D" id="3.40.1380.10">
    <property type="match status" value="1"/>
</dbReference>
<dbReference type="Gene3D" id="1.10.287.80">
    <property type="entry name" value="ATP synthase, gamma subunit, helix hairpin domain"/>
    <property type="match status" value="1"/>
</dbReference>
<dbReference type="HAMAP" id="MF_00815">
    <property type="entry name" value="ATP_synth_gamma_bact"/>
    <property type="match status" value="1"/>
</dbReference>
<dbReference type="InterPro" id="IPR035968">
    <property type="entry name" value="ATP_synth_F1_ATPase_gsu"/>
</dbReference>
<dbReference type="InterPro" id="IPR000131">
    <property type="entry name" value="ATP_synth_F1_gsu"/>
</dbReference>
<dbReference type="InterPro" id="IPR023632">
    <property type="entry name" value="ATP_synth_F1_gsu_CS"/>
</dbReference>
<dbReference type="NCBIfam" id="TIGR01146">
    <property type="entry name" value="ATPsyn_F1gamma"/>
    <property type="match status" value="1"/>
</dbReference>
<dbReference type="PANTHER" id="PTHR11693">
    <property type="entry name" value="ATP SYNTHASE GAMMA CHAIN"/>
    <property type="match status" value="1"/>
</dbReference>
<dbReference type="PANTHER" id="PTHR11693:SF22">
    <property type="entry name" value="ATP SYNTHASE SUBUNIT GAMMA, MITOCHONDRIAL"/>
    <property type="match status" value="1"/>
</dbReference>
<dbReference type="Pfam" id="PF00231">
    <property type="entry name" value="ATP-synt"/>
    <property type="match status" value="1"/>
</dbReference>
<dbReference type="PIRSF" id="PIRSF039089">
    <property type="entry name" value="ATP_synthase_gamma"/>
    <property type="match status" value="1"/>
</dbReference>
<dbReference type="PRINTS" id="PR00126">
    <property type="entry name" value="ATPASEGAMMA"/>
</dbReference>
<dbReference type="SUPFAM" id="SSF52943">
    <property type="entry name" value="ATP synthase (F1-ATPase), gamma subunit"/>
    <property type="match status" value="1"/>
</dbReference>
<dbReference type="PROSITE" id="PS00153">
    <property type="entry name" value="ATPASE_GAMMA"/>
    <property type="match status" value="1"/>
</dbReference>
<keyword id="KW-0066">ATP synthesis</keyword>
<keyword id="KW-0997">Cell inner membrane</keyword>
<keyword id="KW-1003">Cell membrane</keyword>
<keyword id="KW-0139">CF(1)</keyword>
<keyword id="KW-0375">Hydrogen ion transport</keyword>
<keyword id="KW-0406">Ion transport</keyword>
<keyword id="KW-0472">Membrane</keyword>
<keyword id="KW-1185">Reference proteome</keyword>
<keyword id="KW-0813">Transport</keyword>
<evidence type="ECO:0000255" key="1">
    <source>
        <dbReference type="HAMAP-Rule" id="MF_00815"/>
    </source>
</evidence>
<sequence length="287" mass="31824">MASLKSIKKRIVSVKNTGQITKAMKMVSAAKLRRAQENVVAARPYAAKLGEVLGRLSRNQDADSSPLMIKRTTGKALLIVVTSDRGLCGGFNANLCKAAERFVKERGAEFTDLSIMTIGRKGYEFLKNRQKIRKNFGTVFSNLNYQTAALLAQEVIQGYLDEEFDEVFIIYNAFRSVMSQDITLEQLLPVTPPEAADEEYAPEYIYEPSKSELLGELLPKHIEVQIFKSLLESVASEHGARMTAMDSASKNANEMIGKLTLQYNRARQAAITTELMEIISGAESIKG</sequence>
<comment type="function">
    <text evidence="1">Produces ATP from ADP in the presence of a proton gradient across the membrane. The gamma chain is believed to be important in regulating ATPase activity and the flow of protons through the CF(0) complex.</text>
</comment>
<comment type="subunit">
    <text evidence="1">F-type ATPases have 2 components, CF(1) - the catalytic core - and CF(0) - the membrane proton channel. CF(1) has five subunits: alpha(3), beta(3), gamma(1), delta(1), epsilon(1). CF(0) has three main subunits: a, b and c.</text>
</comment>
<comment type="subcellular location">
    <subcellularLocation>
        <location evidence="1">Cell inner membrane</location>
        <topology evidence="1">Peripheral membrane protein</topology>
    </subcellularLocation>
</comment>
<comment type="similarity">
    <text evidence="1">Belongs to the ATPase gamma chain family.</text>
</comment>
<gene>
    <name evidence="1" type="primary">atpG</name>
    <name type="ordered locus">Geob_0448</name>
</gene>